<reference key="1">
    <citation type="journal article" date="1983" name="EMBO J.">
        <title>Structural features of B family chorion sequences in the silkmoth Bombyx mori, and their evolutionary implications.</title>
        <authorList>
            <person name="Tsitilou S.G."/>
            <person name="Rodakis G.C."/>
            <person name="Alexopoulou M."/>
            <person name="Kafatos F.C."/>
            <person name="Ito K."/>
            <person name="Iatrou K."/>
        </authorList>
    </citation>
    <scope>NUCLEOTIDE SEQUENCE [MRNA]</scope>
    <source>
        <strain>703</strain>
    </source>
</reference>
<feature type="chain" id="PRO_0000168184" description="Chorion class B protein M2807">
    <location>
        <begin position="1" status="less than"/>
        <end position="119"/>
    </location>
</feature>
<feature type="region of interest" description="Left arm">
    <location>
        <begin position="1" status="less than"/>
        <end position="11"/>
    </location>
</feature>
<feature type="region of interest" description="Central domain">
    <location>
        <begin position="12"/>
        <end position="80"/>
    </location>
</feature>
<feature type="region of interest" description="Right arm (Gly-rich tandem repeats)">
    <location>
        <begin position="81"/>
        <end position="119"/>
    </location>
</feature>
<feature type="non-terminal residue">
    <location>
        <position position="1"/>
    </location>
</feature>
<name>CHB8_BOMMO</name>
<comment type="function">
    <text>This protein is one of many from the eggshell of the silk moth.</text>
</comment>
<comment type="similarity">
    <text evidence="1">Belongs to the chorion protein family.</text>
</comment>
<accession>P08914</accession>
<keyword id="KW-1185">Reference proteome</keyword>
<keyword id="KW-0677">Repeat</keyword>
<dbReference type="EMBL" id="X12838">
    <property type="protein sequence ID" value="CAA31323.3"/>
    <property type="molecule type" value="mRNA"/>
</dbReference>
<dbReference type="PIR" id="S04513">
    <property type="entry name" value="S04513"/>
</dbReference>
<dbReference type="InParanoid" id="P08914"/>
<dbReference type="Proteomes" id="UP000005204">
    <property type="component" value="Unassembled WGS sequence"/>
</dbReference>
<dbReference type="GO" id="GO:0042600">
    <property type="term" value="C:egg chorion"/>
    <property type="evidence" value="ECO:0007669"/>
    <property type="project" value="InterPro"/>
</dbReference>
<dbReference type="GO" id="GO:0005213">
    <property type="term" value="F:structural constituent of egg chorion"/>
    <property type="evidence" value="ECO:0007669"/>
    <property type="project" value="InterPro"/>
</dbReference>
<dbReference type="GO" id="GO:0007304">
    <property type="term" value="P:chorion-containing eggshell formation"/>
    <property type="evidence" value="ECO:0007669"/>
    <property type="project" value="InterPro"/>
</dbReference>
<dbReference type="InterPro" id="IPR002635">
    <property type="entry name" value="Chorion"/>
</dbReference>
<dbReference type="Pfam" id="PF01723">
    <property type="entry name" value="Chorion_1"/>
    <property type="match status" value="1"/>
</dbReference>
<sequence>GGLGGGCGRGFSGGGLPVATASAAPTGLGIASENRYEGTVGVCGNLPFLGTADVAGEFPTAGIGEIDYGCGNGAVGITREGGLGYGAGYGDGYGLGYGGYGGGYGLGYGGYGGCGCGCG</sequence>
<protein>
    <recommendedName>
        <fullName>Chorion class B protein M2807</fullName>
    </recommendedName>
</protein>
<evidence type="ECO:0000305" key="1"/>
<proteinExistence type="evidence at transcript level"/>
<organism>
    <name type="scientific">Bombyx mori</name>
    <name type="common">Silk moth</name>
    <dbReference type="NCBI Taxonomy" id="7091"/>
    <lineage>
        <taxon>Eukaryota</taxon>
        <taxon>Metazoa</taxon>
        <taxon>Ecdysozoa</taxon>
        <taxon>Arthropoda</taxon>
        <taxon>Hexapoda</taxon>
        <taxon>Insecta</taxon>
        <taxon>Pterygota</taxon>
        <taxon>Neoptera</taxon>
        <taxon>Endopterygota</taxon>
        <taxon>Lepidoptera</taxon>
        <taxon>Glossata</taxon>
        <taxon>Ditrysia</taxon>
        <taxon>Bombycoidea</taxon>
        <taxon>Bombycidae</taxon>
        <taxon>Bombycinae</taxon>
        <taxon>Bombyx</taxon>
    </lineage>
</organism>